<gene>
    <name type="primary">BBP1</name>
    <name type="ORF">VL3_4732</name>
</gene>
<keyword id="KW-0175">Coiled coil</keyword>
<keyword id="KW-0963">Cytoplasm</keyword>
<keyword id="KW-0206">Cytoskeleton</keyword>
<keyword id="KW-0597">Phosphoprotein</keyword>
<sequence>MNQEDNTGGGGIFGLFKWTKDALFGTDISPSMKYKDQEERRDRSRYAQDDTNFSMKFGNDSNRRSTNLSRSNSWSGLDSTLHRKYELLPEYNENGFNSIVNGDHHSKERIRSLRSPAPIVPREPLRNEPTDTFGHRLHTKRRTINELSNSQIPFIPPQEDDPLLSKLFNKDGVNEVRRSPYKLSVKDIPGKFPSPLTKRDEIDNYYVRDEDACHKNREYKKAYFDLFAQMDLNSRDLEDLCEDVREQREQFHRNEQTYKQAYEEMRAELVNELKKSKTLFENYYSLGQKYKSLKKVLDQTISHEAELATSRERLYQEEDLKNFEIQTLKQRLSDLELKYTNLQIEKDMQRDNYESEIHDLLLQLSLRNNERKDTSAGSNIFSTGQYDRTPFHNGNNSYDSNSHSWDTDYLKNIDGFIER</sequence>
<proteinExistence type="inferred from homology"/>
<evidence type="ECO:0000250" key="1"/>
<evidence type="ECO:0000250" key="2">
    <source>
        <dbReference type="UniProtKB" id="Q12365"/>
    </source>
</evidence>
<evidence type="ECO:0000255" key="3"/>
<evidence type="ECO:0000256" key="4">
    <source>
        <dbReference type="SAM" id="MobiDB-lite"/>
    </source>
</evidence>
<evidence type="ECO:0000305" key="5"/>
<dbReference type="EMBL" id="AEJS01000063">
    <property type="protein sequence ID" value="EGA84446.1"/>
    <property type="molecule type" value="Genomic_DNA"/>
</dbReference>
<dbReference type="SMR" id="E7QLJ6"/>
<dbReference type="HOGENOM" id="CLU_711875_0_0_1"/>
<dbReference type="OrthoDB" id="4042536at2759"/>
<dbReference type="GO" id="GO:0005737">
    <property type="term" value="C:cytoplasm"/>
    <property type="evidence" value="ECO:0007669"/>
    <property type="project" value="UniProtKB-KW"/>
</dbReference>
<dbReference type="GO" id="GO:0005816">
    <property type="term" value="C:spindle pole body"/>
    <property type="evidence" value="ECO:0007669"/>
    <property type="project" value="UniProtKB-SubCell"/>
</dbReference>
<dbReference type="InterPro" id="IPR029330">
    <property type="entry name" value="Bbp1_C"/>
</dbReference>
<dbReference type="InterPro" id="IPR029328">
    <property type="entry name" value="Bbp1_N"/>
</dbReference>
<dbReference type="Pfam" id="PF15272">
    <property type="entry name" value="BBP1_C"/>
    <property type="match status" value="1"/>
</dbReference>
<dbReference type="Pfam" id="PF15271">
    <property type="entry name" value="BBP1_N"/>
    <property type="match status" value="1"/>
</dbReference>
<organism>
    <name type="scientific">Saccharomyces cerevisiae (strain Zymaflore VL3)</name>
    <name type="common">Baker's yeast</name>
    <dbReference type="NCBI Taxonomy" id="764100"/>
    <lineage>
        <taxon>Eukaryota</taxon>
        <taxon>Fungi</taxon>
        <taxon>Dikarya</taxon>
        <taxon>Ascomycota</taxon>
        <taxon>Saccharomycotina</taxon>
        <taxon>Saccharomycetes</taxon>
        <taxon>Saccharomycetales</taxon>
        <taxon>Saccharomycetaceae</taxon>
        <taxon>Saccharomyces</taxon>
    </lineage>
</organism>
<reference key="1">
    <citation type="journal article" date="2011" name="PLoS Genet.">
        <title>Whole-genome comparison reveals novel genetic elements that characterize the genome of industrial strains of Saccharomyces cerevisiae.</title>
        <authorList>
            <person name="Borneman A.R."/>
            <person name="Desany B.A."/>
            <person name="Riches D."/>
            <person name="Affourtit J.P."/>
            <person name="Forgan A.H."/>
            <person name="Pretorius I.S."/>
            <person name="Egholm M."/>
            <person name="Chambers P.J."/>
        </authorList>
    </citation>
    <scope>NUCLEOTIDE SEQUENCE [LARGE SCALE GENOMIC DNA]</scope>
    <source>
        <strain>Zymaflore VL3</strain>
    </source>
</reference>
<comment type="function">
    <text evidence="1">Component of the spindle pole body (SPB) required for insertion of the nascent SPB into the nuclear envelope and for the proper execution of spindle pole body (SPB) duplication. Connects the central plaque of the SPB with the half-bridge. Required for proper localization of CDC5 at the SPB and for proper M-phase progression (By similarity).</text>
</comment>
<comment type="subunit">
    <text evidence="1">Homodimer. Interacts with KAR1, MPS2 and SPC29.</text>
</comment>
<comment type="subcellular location">
    <subcellularLocation>
        <location evidence="1">Cytoplasm</location>
        <location evidence="1">Cytoskeleton</location>
        <location evidence="1">Microtubule organizing center</location>
        <location evidence="1">Spindle pole body</location>
    </subcellularLocation>
    <text evidence="1">Associates with the periphary of the central plaque.</text>
</comment>
<comment type="similarity">
    <text evidence="5">Belongs to the BBP1 family.</text>
</comment>
<accession>E7QLJ6</accession>
<protein>
    <recommendedName>
        <fullName>Spindle pole component BBP1</fullName>
    </recommendedName>
    <alternativeName>
        <fullName>BFR1-binding protein 1</fullName>
    </alternativeName>
</protein>
<feature type="chain" id="PRO_0000409183" description="Spindle pole component BBP1">
    <location>
        <begin position="1"/>
        <end position="419"/>
    </location>
</feature>
<feature type="region of interest" description="Disordered" evidence="4">
    <location>
        <begin position="34"/>
        <end position="76"/>
    </location>
</feature>
<feature type="coiled-coil region" evidence="3">
    <location>
        <begin position="229"/>
        <end position="355"/>
    </location>
</feature>
<feature type="compositionally biased region" description="Basic and acidic residues" evidence="4">
    <location>
        <begin position="34"/>
        <end position="48"/>
    </location>
</feature>
<feature type="compositionally biased region" description="Low complexity" evidence="4">
    <location>
        <begin position="64"/>
        <end position="75"/>
    </location>
</feature>
<feature type="modified residue" description="Phosphoserine" evidence="2">
    <location>
        <position position="29"/>
    </location>
</feature>
<feature type="modified residue" description="Phosphoserine" evidence="2">
    <location>
        <position position="73"/>
    </location>
</feature>
<feature type="modified residue" description="Phosphoserine" evidence="2">
    <location>
        <position position="115"/>
    </location>
</feature>
<name>BBP1_YEASZ</name>